<comment type="function">
    <text evidence="5 11">Acts as an adapter for the receptor ERBB2, in epithelia. By binding the unphosphorylated 'Tyr-1248' of receptor ERBB2, it may contribute to stabilize this unphosphorylated state (PubMed:16203728). Inhibits NOD2-dependent NF-kappa-B signaling and pro-inflammatory cytokine secretion (PubMed:16203728).</text>
</comment>
<comment type="subunit">
    <text evidence="5 6 7 8 9 11">Interacts with ERBB2, BPAG1 and ITGB4 (PubMed:10878805, PubMed:11375975, PubMed:12444095). May favor the localization of ERBB2, by restricting its presence to the basolateral membrane of epithelial cells. Also found to interact with ARVCF and delta catenin (PubMed:11821434). Interacts (via C-terminus) with DST Isoform 3 (via N-terminus) (PubMed:11375975). Interacts with NOD2 (via CARD domain) (PubMed:16203728).</text>
</comment>
<comment type="interaction">
    <interactant intactId="EBI-993903">
        <id>Q96RT1</id>
    </interactant>
    <interactant intactId="EBI-7445625">
        <id>Q9HC29</id>
        <label>NOD2</label>
    </interactant>
    <organismsDiffer>false</organismsDiffer>
    <experiments>5</experiments>
</comment>
<comment type="interaction">
    <interactant intactId="EBI-993903">
        <id>Q96RT1</id>
    </interactant>
    <interactant intactId="EBI-726447">
        <id>Q99569</id>
        <label>PKP4</label>
    </interactant>
    <organismsDiffer>false</organismsDiffer>
    <experiments>4</experiments>
</comment>
<comment type="interaction">
    <interactant intactId="EBI-8449250">
        <id>Q96RT1-2</id>
    </interactant>
    <interactant intactId="EBI-7445625">
        <id>Q9HC29</id>
        <label>NOD2</label>
    </interactant>
    <organismsDiffer>false</organismsDiffer>
    <experiments>5</experiments>
</comment>
<comment type="interaction">
    <interactant intactId="EBI-8449250">
        <id>Q96RT1-2</id>
    </interactant>
    <interactant intactId="EBI-726447">
        <id>Q99569</id>
        <label>PKP4</label>
    </interactant>
    <organismsDiffer>false</organismsDiffer>
    <experiments>4</experiments>
</comment>
<comment type="subcellular location">
    <subcellularLocation>
        <location evidence="5 6">Cell junction</location>
        <location evidence="5 6">Hemidesmosome</location>
    </subcellularLocation>
    <subcellularLocation>
        <location evidence="1">Nucleus membrane</location>
    </subcellularLocation>
    <subcellularLocation>
        <location evidence="11">Basolateral cell membrane</location>
    </subcellularLocation>
    <text evidence="1">Found in hemidesmosomes, which are cell-substrate adhesion complexes in stratified epithelia. In transfected cells, either diffusely distributed over the cytoplasm or concentrated at the basolateral membrane. Colocalizes with the adrenergic receptors, ADREN1A and ADREN1B, at the nuclear membrane of cardiac myocytes (By similarity).</text>
</comment>
<comment type="alternative products">
    <event type="alternative splicing"/>
    <isoform>
        <id>Q96RT1-1</id>
        <name>1</name>
        <sequence type="displayed"/>
    </isoform>
    <isoform>
        <id>Q96RT1-2</id>
        <name>2</name>
        <sequence type="described" ref="VSP_010802"/>
    </isoform>
    <isoform>
        <id>Q96RT1-3</id>
        <name>3</name>
        <sequence type="described" ref="VSP_010802 VSP_010804"/>
    </isoform>
    <isoform>
        <id>Q96RT1-4</id>
        <name>4</name>
        <sequence type="described" ref="VSP_010802 VSP_010807"/>
    </isoform>
    <isoform>
        <id>Q96RT1-5</id>
        <name>5</name>
        <sequence type="described" ref="VSP_010802 VSP_010803"/>
    </isoform>
    <isoform>
        <id>Q96RT1-6</id>
        <name>6</name>
        <sequence type="described" ref="VSP_010802 VSP_010806"/>
    </isoform>
    <isoform>
        <id>Q96RT1-7</id>
        <name>7</name>
        <sequence type="described" ref="VSP_010802 VSP_010803 VSP_010804 VSP_010805"/>
    </isoform>
    <isoform>
        <id>Q96RT1-8</id>
        <name>8</name>
        <sequence type="described" ref="VSP_044536"/>
    </isoform>
    <isoform>
        <id>Q96RT1-9</id>
        <name>9</name>
        <sequence type="described" ref="VSP_047389 VSP_010802"/>
    </isoform>
</comment>
<comment type="tissue specificity">
    <text evidence="5">Highly expressed in brain, heart, kidney, muscle and stomach, followed by liver, spleen and intestine.</text>
</comment>
<comment type="similarity">
    <text evidence="17">Belongs to the LAP (LRR and PDZ) protein family.</text>
</comment>
<comment type="sequence caution" evidence="17">
    <conflict type="miscellaneous discrepancy">
        <sequence resource="EMBL-CDS" id="AAH50692"/>
    </conflict>
    <text>Contaminating sequence. Potential poly-A sequence.</text>
</comment>
<comment type="sequence caution" evidence="17">
    <conflict type="erroneous initiation">
        <sequence resource="EMBL-CDS" id="BAA91538"/>
    </conflict>
    <text>Truncated N-terminus.</text>
</comment>
<proteinExistence type="evidence at protein level"/>
<accession>Q96RT1</accession>
<accession>A0AVR1</accession>
<accession>B4E3F1</accession>
<accession>B7ZLV9</accession>
<accession>E7EQW9</accession>
<accession>E9PCR8</accession>
<accession>Q1RMD0</accession>
<accession>Q86W38</accession>
<accession>Q9NR18</accession>
<accession>Q9NW48</accession>
<accession>Q9ULJ5</accession>
<feature type="chain" id="PRO_0000188301" description="Erbin">
    <location>
        <begin position="1"/>
        <end position="1412"/>
    </location>
</feature>
<feature type="repeat" description="LRR 1">
    <location>
        <begin position="23"/>
        <end position="44"/>
    </location>
</feature>
<feature type="repeat" description="LRR 2">
    <location>
        <begin position="47"/>
        <end position="68"/>
    </location>
</feature>
<feature type="repeat" description="LRR 3">
    <location>
        <begin position="70"/>
        <end position="91"/>
    </location>
</feature>
<feature type="repeat" description="LRR 4">
    <location>
        <begin position="93"/>
        <end position="114"/>
    </location>
</feature>
<feature type="repeat" description="LRR 5">
    <location>
        <begin position="116"/>
        <end position="137"/>
    </location>
</feature>
<feature type="repeat" description="LRR 6">
    <location>
        <begin position="139"/>
        <end position="161"/>
    </location>
</feature>
<feature type="repeat" description="LRR 7">
    <location>
        <begin position="162"/>
        <end position="183"/>
    </location>
</feature>
<feature type="repeat" description="LRR 8">
    <location>
        <begin position="185"/>
        <end position="206"/>
    </location>
</feature>
<feature type="repeat" description="LRR 9">
    <location>
        <begin position="208"/>
        <end position="229"/>
    </location>
</feature>
<feature type="repeat" description="LRR 10">
    <location>
        <begin position="231"/>
        <end position="252"/>
    </location>
</feature>
<feature type="repeat" description="LRR 11">
    <location>
        <begin position="254"/>
        <end position="275"/>
    </location>
</feature>
<feature type="repeat" description="LRR 12">
    <location>
        <begin position="277"/>
        <end position="298"/>
    </location>
</feature>
<feature type="repeat" description="LRR 13">
    <location>
        <begin position="300"/>
        <end position="321"/>
    </location>
</feature>
<feature type="repeat" description="LRR 14">
    <location>
        <begin position="323"/>
        <end position="344"/>
    </location>
</feature>
<feature type="repeat" description="LRR 15">
    <location>
        <begin position="346"/>
        <end position="367"/>
    </location>
</feature>
<feature type="repeat" description="LRR 16">
    <location>
        <begin position="369"/>
        <end position="391"/>
    </location>
</feature>
<feature type="repeat" description="LRR 17">
    <location>
        <begin position="392"/>
        <end position="413"/>
    </location>
</feature>
<feature type="domain" description="PDZ" evidence="3">
    <location>
        <begin position="1321"/>
        <end position="1410"/>
    </location>
</feature>
<feature type="region of interest" description="Disordered" evidence="4">
    <location>
        <begin position="464"/>
        <end position="489"/>
    </location>
</feature>
<feature type="region of interest" description="Disordered" evidence="4">
    <location>
        <begin position="506"/>
        <end position="542"/>
    </location>
</feature>
<feature type="region of interest" description="Disordered" evidence="4">
    <location>
        <begin position="615"/>
        <end position="681"/>
    </location>
</feature>
<feature type="region of interest" description="Disordered" evidence="4">
    <location>
        <begin position="803"/>
        <end position="867"/>
    </location>
</feature>
<feature type="region of interest" description="Disordered" evidence="4">
    <location>
        <begin position="997"/>
        <end position="1021"/>
    </location>
</feature>
<feature type="region of interest" description="Disordered" evidence="4">
    <location>
        <begin position="1075"/>
        <end position="1192"/>
    </location>
</feature>
<feature type="compositionally biased region" description="Basic and acidic residues" evidence="4">
    <location>
        <begin position="470"/>
        <end position="480"/>
    </location>
</feature>
<feature type="compositionally biased region" description="Basic and acidic residues" evidence="4">
    <location>
        <begin position="506"/>
        <end position="532"/>
    </location>
</feature>
<feature type="compositionally biased region" description="Low complexity" evidence="4">
    <location>
        <begin position="533"/>
        <end position="542"/>
    </location>
</feature>
<feature type="compositionally biased region" description="Basic and acidic residues" evidence="4">
    <location>
        <begin position="632"/>
        <end position="641"/>
    </location>
</feature>
<feature type="compositionally biased region" description="Low complexity" evidence="4">
    <location>
        <begin position="650"/>
        <end position="662"/>
    </location>
</feature>
<feature type="compositionally biased region" description="Polar residues" evidence="4">
    <location>
        <begin position="663"/>
        <end position="681"/>
    </location>
</feature>
<feature type="compositionally biased region" description="Polar residues" evidence="4">
    <location>
        <begin position="817"/>
        <end position="835"/>
    </location>
</feature>
<feature type="compositionally biased region" description="Polar residues" evidence="4">
    <location>
        <begin position="1075"/>
        <end position="1086"/>
    </location>
</feature>
<feature type="compositionally biased region" description="Polar residues" evidence="4">
    <location>
        <begin position="1157"/>
        <end position="1171"/>
    </location>
</feature>
<feature type="modified residue" description="Phosphoserine" evidence="21">
    <location>
        <position position="440"/>
    </location>
</feature>
<feature type="modified residue" description="Phosphoserine" evidence="2">
    <location>
        <position position="444"/>
    </location>
</feature>
<feature type="modified residue" description="Phosphotyrosine" evidence="2">
    <location>
        <position position="483"/>
    </location>
</feature>
<feature type="modified residue" description="Phosphothreonine" evidence="25 26">
    <location>
        <position position="485"/>
    </location>
</feature>
<feature type="modified residue" description="Phosphoserine" evidence="22 24">
    <location>
        <position position="569"/>
    </location>
</feature>
<feature type="modified residue" description="Phosphoserine" evidence="2">
    <location>
        <position position="598"/>
    </location>
</feature>
<feature type="modified residue" description="Phosphoserine" evidence="24">
    <location>
        <position position="602"/>
    </location>
</feature>
<feature type="modified residue" description="Phosphoserine" evidence="24">
    <location>
        <position position="603"/>
    </location>
</feature>
<feature type="modified residue" description="Phosphoserine" evidence="25">
    <location>
        <position position="620"/>
    </location>
</feature>
<feature type="modified residue" description="Phosphoserine" evidence="2">
    <location>
        <position position="715"/>
    </location>
</feature>
<feature type="modified residue" description="Phosphoserine" evidence="26">
    <location>
        <position position="852"/>
    </location>
</feature>
<feature type="modified residue" description="Phosphoserine" evidence="22">
    <location>
        <position position="857"/>
    </location>
</feature>
<feature type="modified residue" description="Phosphoserine" evidence="23 25">
    <location>
        <position position="872"/>
    </location>
</feature>
<feature type="modified residue" description="Phosphothreonine" evidence="22 23">
    <location>
        <position position="917"/>
    </location>
</feature>
<feature type="modified residue" description="Phosphotyrosine" evidence="19">
    <location>
        <position position="920"/>
    </location>
</feature>
<feature type="modified residue" description="Phosphoserine" evidence="23">
    <location>
        <position position="931"/>
    </location>
</feature>
<feature type="modified residue" description="Phosphotyrosine" evidence="20">
    <location>
        <position position="972"/>
    </location>
</feature>
<feature type="modified residue" description="Phosphotyrosine" evidence="2">
    <location>
        <position position="1104"/>
    </location>
</feature>
<feature type="modified residue" description="Phosphoserine" evidence="23 25">
    <location>
        <position position="1158"/>
    </location>
</feature>
<feature type="modified residue" description="Phosphoserine" evidence="25">
    <location>
        <position position="1179"/>
    </location>
</feature>
<feature type="modified residue" description="Phosphoserine" evidence="22">
    <location>
        <position position="1286"/>
    </location>
</feature>
<feature type="splice variant" id="VSP_047389" description="In isoform 9." evidence="16">
    <location>
        <begin position="531"/>
        <end position="534"/>
    </location>
</feature>
<feature type="splice variant" id="VSP_010802" description="In isoform 2, isoform 3, isoform 4, isoform 5, isoform 6, isoform 7 and isoform 9." evidence="12 13 14 15 16">
    <location>
        <begin position="1212"/>
        <end position="1252"/>
    </location>
</feature>
<feature type="splice variant" id="VSP_044536" description="In isoform 8." evidence="16">
    <original>KHPQTSSSGDPCQDGIFISGQQNYSSATLSHKDVPPDSLMK</original>
    <variation>SMLSRSFNSNFTTVSSFHCGSSRDLHGSQGSLALSVADRRGSGGHIFR</variation>
    <location>
        <begin position="1212"/>
        <end position="1252"/>
    </location>
</feature>
<feature type="splice variant" id="VSP_010803" description="In isoform 5 and isoform 7." evidence="14">
    <location>
        <begin position="1253"/>
        <end position="1267"/>
    </location>
</feature>
<feature type="splice variant" id="VSP_010804" description="In isoform 3 and isoform 7." evidence="14">
    <location>
        <begin position="1268"/>
        <end position="1278"/>
    </location>
</feature>
<feature type="splice variant" id="VSP_010805" description="In isoform 7." evidence="14">
    <location>
        <begin position="1279"/>
        <end position="1321"/>
    </location>
</feature>
<feature type="splice variant" id="VSP_010806" description="In isoform 6." evidence="14">
    <location>
        <begin position="1322"/>
        <end position="1352"/>
    </location>
</feature>
<feature type="splice variant" id="VSP_010807" description="In isoform 4." evidence="14 15">
    <location>
        <begin position="1353"/>
        <end position="1377"/>
    </location>
</feature>
<feature type="sequence variant" id="VAR_019346" description="In dbSNP:rs3213837." evidence="10">
    <original>S</original>
    <variation>L</variation>
    <location>
        <position position="274"/>
    </location>
</feature>
<feature type="sequence variant" id="VAR_068905" description="In dbSNP:rs191137999." evidence="10">
    <original>A</original>
    <variation>V</variation>
    <location>
        <position position="313"/>
    </location>
</feature>
<feature type="sequence variant" id="VAR_028304" description="In dbSNP:rs16894812.">
    <original>K</original>
    <variation>E</variation>
    <location>
        <position position="746"/>
    </location>
</feature>
<feature type="sequence variant" id="VAR_046673" description="In dbSNP:rs34521887.">
    <original>K</original>
    <variation>R</variation>
    <location>
        <position position="914"/>
    </location>
</feature>
<feature type="sequence variant" id="VAR_046674" description="In dbSNP:rs35601230.">
    <original>G</original>
    <variation>V</variation>
    <location>
        <position position="1089"/>
    </location>
</feature>
<feature type="sequence variant" id="VAR_019347" description="In dbSNP:rs3805466.">
    <original>S</original>
    <variation>L</variation>
    <location>
        <position position="1112"/>
    </location>
</feature>
<feature type="sequence variant" id="VAR_019348" evidence="6">
    <original>K</original>
    <variation>E</variation>
    <location>
        <position position="1207"/>
    </location>
</feature>
<feature type="sequence conflict" description="In Ref. 7; AAI15013." evidence="17" ref="7">
    <original>T</original>
    <variation>P</variation>
    <location>
        <position position="271"/>
    </location>
</feature>
<feature type="sequence conflict" description="In Ref. 7; AAI15013." evidence="17" ref="7">
    <original>D</original>
    <variation>G</variation>
    <location>
        <position position="547"/>
    </location>
</feature>
<feature type="sequence conflict" description="In Ref. 5; BAA91538." evidence="17" ref="5">
    <original>E</original>
    <variation>G</variation>
    <location>
        <position position="805"/>
    </location>
</feature>
<feature type="sequence conflict" description="In Ref. 2; AAK69431." evidence="17" ref="2">
    <original>Y</original>
    <variation>C</variation>
    <location>
        <position position="813"/>
    </location>
</feature>
<feature type="sequence conflict" description="In Ref. 5; BAG65463." evidence="17" ref="5">
    <original>G</original>
    <variation>C</variation>
    <location>
        <position position="848"/>
    </location>
</feature>
<feature type="sequence conflict" description="In Ref. 5; BAG65463." evidence="17" ref="5">
    <original>R</original>
    <variation>S</variation>
    <location>
        <position position="1047"/>
    </location>
</feature>
<feature type="sequence conflict" description="In Ref. 7; AAI15013." evidence="17" ref="7">
    <original>E</original>
    <variation>G</variation>
    <location>
        <position position="1205"/>
    </location>
</feature>
<feature type="sequence conflict" description="In Ref. 7; AAI15013." evidence="17" ref="7">
    <original>Q</original>
    <variation>P</variation>
    <location>
        <position position="1267"/>
    </location>
</feature>
<feature type="sequence conflict" description="In Ref. 7; AAI15013." evidence="17" ref="7">
    <original>K</original>
    <variation>R</variation>
    <location>
        <position position="1328"/>
    </location>
</feature>
<feature type="strand" evidence="27">
    <location>
        <begin position="1318"/>
        <end position="1327"/>
    </location>
</feature>
<feature type="strand" evidence="27">
    <location>
        <begin position="1329"/>
        <end position="1331"/>
    </location>
</feature>
<feature type="strand" evidence="27">
    <location>
        <begin position="1333"/>
        <end position="1338"/>
    </location>
</feature>
<feature type="turn" evidence="27">
    <location>
        <begin position="1339"/>
        <end position="1342"/>
    </location>
</feature>
<feature type="strand" evidence="27">
    <location>
        <begin position="1346"/>
        <end position="1348"/>
    </location>
</feature>
<feature type="strand" evidence="27">
    <location>
        <begin position="1353"/>
        <end position="1359"/>
    </location>
</feature>
<feature type="turn" evidence="27">
    <location>
        <begin position="1364"/>
        <end position="1368"/>
    </location>
</feature>
<feature type="strand" evidence="27">
    <location>
        <begin position="1374"/>
        <end position="1378"/>
    </location>
</feature>
<feature type="helix" evidence="27">
    <location>
        <begin position="1388"/>
        <end position="1397"/>
    </location>
</feature>
<feature type="strand" evidence="27">
    <location>
        <begin position="1400"/>
        <end position="1410"/>
    </location>
</feature>
<evidence type="ECO:0000250" key="1"/>
<evidence type="ECO:0000250" key="2">
    <source>
        <dbReference type="UniProtKB" id="Q80TH2"/>
    </source>
</evidence>
<evidence type="ECO:0000255" key="3">
    <source>
        <dbReference type="PROSITE-ProRule" id="PRU00143"/>
    </source>
</evidence>
<evidence type="ECO:0000256" key="4">
    <source>
        <dbReference type="SAM" id="MobiDB-lite"/>
    </source>
</evidence>
<evidence type="ECO:0000269" key="5">
    <source>
    </source>
</evidence>
<evidence type="ECO:0000269" key="6">
    <source>
    </source>
</evidence>
<evidence type="ECO:0000269" key="7">
    <source>
    </source>
</evidence>
<evidence type="ECO:0000269" key="8">
    <source>
    </source>
</evidence>
<evidence type="ECO:0000269" key="9">
    <source>
    </source>
</evidence>
<evidence type="ECO:0000269" key="10">
    <source>
    </source>
</evidence>
<evidence type="ECO:0000269" key="11">
    <source>
    </source>
</evidence>
<evidence type="ECO:0000303" key="12">
    <source>
    </source>
</evidence>
<evidence type="ECO:0000303" key="13">
    <source>
    </source>
</evidence>
<evidence type="ECO:0000303" key="14">
    <source>
    </source>
</evidence>
<evidence type="ECO:0000303" key="15">
    <source>
    </source>
</evidence>
<evidence type="ECO:0000303" key="16">
    <source>
    </source>
</evidence>
<evidence type="ECO:0000305" key="17"/>
<evidence type="ECO:0000312" key="18">
    <source>
        <dbReference type="EMBL" id="BAA86539.2"/>
    </source>
</evidence>
<evidence type="ECO:0007744" key="19">
    <source>
    </source>
</evidence>
<evidence type="ECO:0007744" key="20">
    <source>
    </source>
</evidence>
<evidence type="ECO:0007744" key="21">
    <source>
    </source>
</evidence>
<evidence type="ECO:0007744" key="22">
    <source>
    </source>
</evidence>
<evidence type="ECO:0007744" key="23">
    <source>
    </source>
</evidence>
<evidence type="ECO:0007744" key="24">
    <source>
    </source>
</evidence>
<evidence type="ECO:0007744" key="25">
    <source>
    </source>
</evidence>
<evidence type="ECO:0007744" key="26">
    <source>
    </source>
</evidence>
<evidence type="ECO:0007829" key="27">
    <source>
        <dbReference type="PDB" id="2H3L"/>
    </source>
</evidence>
<sequence>MTTKRSLFVRLVPCRCLRGEEETVTTLDYSHCSLEQVPKEIFTFEKTLEELYLDANQIEELPKQLFNCQSLHKLSLPDNDLTTLPASIANLINLRELDVSKNGIQEFPENIKNCKVLTIVEASVNPISKLPDGFSQLLNLTQLYLNDAFLEFLPANFGRLTKLQILELRENQLKMLPKTMNRLTQLERLDLGSNEFTEVPEVLEQLSGLKEFWMDANRLTFIPGFIGSLKQLTYLDVSKNNIEMVEEGISTCENLQDLLLSSNSLQQLPETIGSLKNITTLKIDENQLMYLPDSIGGLISVEELDCSFNEVEALPSSIGQLTNLRTFAADHNYLQQLPPEIGSWKNITVLFLHSNKLETLPEEMGDMQKLKVINLSDNRLKNLPFSFTKLQQLTAMWLSDNQSKPLIPLQKETDSETQKMVLTNYMFPQQPRTEDVMFISDNESFNPSLWEEQRKQRAQVAFECDEDKDEREAPPREGNLKRYPTPYPDELKNMVKTVQTIVHRLKDEETNEDSGRDLKPHEDQQDINKDVGVKTSESTTTVKSKVDEREKYMIGNSVQKISEPEAEISPGSLPVTANMKASENLKHIVNHDDVFEESEELSSDEEMKMAEMRPPLIETSINQPKVVALSNNKKDDTKETDSLSDEVTHNSNQNNSNCSSPSRMSDSVSLNTDSSQDTSLCSPVKQTHIDINSKIRQEDENFNSLLQNGDILNSSTEEKFKAHDKKDFNLPEYDLNVEERLVLIEKSVDSTATADDTHKLDHINMNLNKLITNDTFQPEIMERSKTQDIVLGTSFLSINSKEETEHLENGNKYPNLESVNKVNGHSEETSQSPNRTEPHDSDCSVDLGISKSTEDLSPQKSGPVGSVVKSHSITNMEIGGLKIYDILSDNGPQQPSTTVKITSAVDGKNIVRSKSATLLYDQPLQVFTGSSSSSDLISGTKAIFKFDSNHNPEEPNIIRGPTSGPQSAPQIYGPPQYNIQYSSSAAVKDTLWHSKQNPQIDHASFPPQLLPRSESTENQSYAKHSANMNFSNHNNVRANTAYHLHQRLGPARHGEMWAISPNDRLIPAVTRSTIQRQSSVSSTASVNLGDPGSTRRAQIPEGDYLSYREFHSAGRTPPMMPGSQRPLSARTYSIDGPNASRPQSARPSINEIPERTMSVSDFNYSRTSPSKRPNARVGSEHSLLDPPGKSKVPRDWREQVLRHIEAKKLEKKHPQTSSSGDPCQDGIFISGQQNYSSATLSHKDVPPDSLMKMPLSNGQMGQPLRPQANYSQIHHPPQASVARHPSREQLIDYLMLKVAHQPPYTQPHCSPRQGHELAKQEIRVRVEKDPELGFSISGGVGGRGNPFRPDDDGIFVTRVQPEGPASKLLQPGDKIIQANGYSFINIEHGQAVSLLKTFQNTVELIIVREVSS</sequence>
<keyword id="KW-0002">3D-structure</keyword>
<keyword id="KW-0025">Alternative splicing</keyword>
<keyword id="KW-0965">Cell junction</keyword>
<keyword id="KW-1003">Cell membrane</keyword>
<keyword id="KW-0433">Leucine-rich repeat</keyword>
<keyword id="KW-0472">Membrane</keyword>
<keyword id="KW-0539">Nucleus</keyword>
<keyword id="KW-0597">Phosphoprotein</keyword>
<keyword id="KW-1267">Proteomics identification</keyword>
<keyword id="KW-1185">Reference proteome</keyword>
<keyword id="KW-0677">Repeat</keyword>
<protein>
    <recommendedName>
        <fullName evidence="13">Erbin</fullName>
    </recommendedName>
    <alternativeName>
        <fullName>Densin-180-like protein</fullName>
    </alternativeName>
    <alternativeName>
        <fullName evidence="13">Erbb2-interacting protein</fullName>
    </alternativeName>
    <alternativeName>
        <fullName>Protein LAP2</fullName>
    </alternativeName>
</protein>
<gene>
    <name evidence="13" type="primary">ERBIN</name>
    <name evidence="13" type="synonym">ERBB2IP</name>
    <name evidence="18" type="synonym">KIAA1225</name>
    <name type="synonym">LAP2</name>
</gene>
<reference key="1">
    <citation type="journal article" date="2000" name="Nat. Cell Biol.">
        <title>ERBIN: a basolateral PDZ protein that interacts with the mammalian ERBB2/HER2 receptor.</title>
        <authorList>
            <person name="Borg J.-P."/>
            <person name="Marchetto S."/>
            <person name="Le Bivic A."/>
            <person name="Ollendorff V."/>
            <person name="Jaulin-Bastard F."/>
            <person name="Saito H."/>
            <person name="Fournier E."/>
            <person name="Adelaide J."/>
            <person name="Margolis B."/>
            <person name="Birnbaum D."/>
        </authorList>
    </citation>
    <scope>NUCLEOTIDE SEQUENCE [MRNA] (ISOFORM 2)</scope>
    <scope>INTERACTION WITH ERBB2</scope>
    <scope>TISSUE SPECIFICITY</scope>
    <scope>SUBCELLULAR LOCATION</scope>
    <scope>FUNCTION</scope>
    <source>
        <tissue>B-cell</tissue>
    </source>
</reference>
<reference key="2">
    <citation type="journal article" date="2001" name="J. Biol. Chem.">
        <title>The hemidesmosomal protein bullous pemphigoid antigen 1 and the integrin beta 4 subunit bind to ERBIN. Molecular cloning of multiple alternative splice variants of ERBIN and analysis of their tissue expression.</title>
        <authorList>
            <person name="Favre B."/>
            <person name="Fontao L."/>
            <person name="Koster J."/>
            <person name="Shafaatian R."/>
            <person name="Jaunin F."/>
            <person name="Saurat J.-H."/>
            <person name="Sonnenberg A."/>
            <person name="Borradori L."/>
        </authorList>
    </citation>
    <scope>NUCLEOTIDE SEQUENCE [MRNA] (ISOFORMS 1; 2; 3; 4; 5; 6 AND 7)</scope>
    <scope>INTERACTION WITH BPAG1; DST AND ITGB4</scope>
    <scope>SUBCELLULAR LOCATION</scope>
    <scope>VARIANT GLU-1207</scope>
</reference>
<reference key="3">
    <citation type="journal article" date="1999" name="DNA Res.">
        <title>Prediction of the coding sequences of unidentified human genes. XV. The complete sequences of 100 new cDNA clones from brain which code for large proteins in vitro.</title>
        <authorList>
            <person name="Nagase T."/>
            <person name="Ishikawa K."/>
            <person name="Kikuno R."/>
            <person name="Hirosawa M."/>
            <person name="Nomura N."/>
            <person name="Ohara O."/>
        </authorList>
    </citation>
    <scope>NUCLEOTIDE SEQUENCE [LARGE SCALE MRNA] (ISOFORM 2)</scope>
    <source>
        <tissue>Brain</tissue>
    </source>
</reference>
<reference key="4">
    <citation type="journal article" date="2002" name="DNA Res.">
        <title>Construction of expression-ready cDNA clones for KIAA genes: manual curation of 330 KIAA cDNA clones.</title>
        <authorList>
            <person name="Nakajima D."/>
            <person name="Okazaki N."/>
            <person name="Yamakawa H."/>
            <person name="Kikuno R."/>
            <person name="Ohara O."/>
            <person name="Nagase T."/>
        </authorList>
    </citation>
    <scope>SEQUENCE REVISION</scope>
</reference>
<reference key="5">
    <citation type="journal article" date="2004" name="Nat. Genet.">
        <title>Complete sequencing and characterization of 21,243 full-length human cDNAs.</title>
        <authorList>
            <person name="Ota T."/>
            <person name="Suzuki Y."/>
            <person name="Nishikawa T."/>
            <person name="Otsuki T."/>
            <person name="Sugiyama T."/>
            <person name="Irie R."/>
            <person name="Wakamatsu A."/>
            <person name="Hayashi K."/>
            <person name="Sato H."/>
            <person name="Nagai K."/>
            <person name="Kimura K."/>
            <person name="Makita H."/>
            <person name="Sekine M."/>
            <person name="Obayashi M."/>
            <person name="Nishi T."/>
            <person name="Shibahara T."/>
            <person name="Tanaka T."/>
            <person name="Ishii S."/>
            <person name="Yamamoto J."/>
            <person name="Saito K."/>
            <person name="Kawai Y."/>
            <person name="Isono Y."/>
            <person name="Nakamura Y."/>
            <person name="Nagahari K."/>
            <person name="Murakami K."/>
            <person name="Yasuda T."/>
            <person name="Iwayanagi T."/>
            <person name="Wagatsuma M."/>
            <person name="Shiratori A."/>
            <person name="Sudo H."/>
            <person name="Hosoiri T."/>
            <person name="Kaku Y."/>
            <person name="Kodaira H."/>
            <person name="Kondo H."/>
            <person name="Sugawara M."/>
            <person name="Takahashi M."/>
            <person name="Kanda K."/>
            <person name="Yokoi T."/>
            <person name="Furuya T."/>
            <person name="Kikkawa E."/>
            <person name="Omura Y."/>
            <person name="Abe K."/>
            <person name="Kamihara K."/>
            <person name="Katsuta N."/>
            <person name="Sato K."/>
            <person name="Tanikawa M."/>
            <person name="Yamazaki M."/>
            <person name="Ninomiya K."/>
            <person name="Ishibashi T."/>
            <person name="Yamashita H."/>
            <person name="Murakawa K."/>
            <person name="Fujimori K."/>
            <person name="Tanai H."/>
            <person name="Kimata M."/>
            <person name="Watanabe M."/>
            <person name="Hiraoka S."/>
            <person name="Chiba Y."/>
            <person name="Ishida S."/>
            <person name="Ono Y."/>
            <person name="Takiguchi S."/>
            <person name="Watanabe S."/>
            <person name="Yosida M."/>
            <person name="Hotuta T."/>
            <person name="Kusano J."/>
            <person name="Kanehori K."/>
            <person name="Takahashi-Fujii A."/>
            <person name="Hara H."/>
            <person name="Tanase T.-O."/>
            <person name="Nomura Y."/>
            <person name="Togiya S."/>
            <person name="Komai F."/>
            <person name="Hara R."/>
            <person name="Takeuchi K."/>
            <person name="Arita M."/>
            <person name="Imose N."/>
            <person name="Musashino K."/>
            <person name="Yuuki H."/>
            <person name="Oshima A."/>
            <person name="Sasaki N."/>
            <person name="Aotsuka S."/>
            <person name="Yoshikawa Y."/>
            <person name="Matsunawa H."/>
            <person name="Ichihara T."/>
            <person name="Shiohata N."/>
            <person name="Sano S."/>
            <person name="Moriya S."/>
            <person name="Momiyama H."/>
            <person name="Satoh N."/>
            <person name="Takami S."/>
            <person name="Terashima Y."/>
            <person name="Suzuki O."/>
            <person name="Nakagawa S."/>
            <person name="Senoh A."/>
            <person name="Mizoguchi H."/>
            <person name="Goto Y."/>
            <person name="Shimizu F."/>
            <person name="Wakebe H."/>
            <person name="Hishigaki H."/>
            <person name="Watanabe T."/>
            <person name="Sugiyama A."/>
            <person name="Takemoto M."/>
            <person name="Kawakami B."/>
            <person name="Yamazaki M."/>
            <person name="Watanabe K."/>
            <person name="Kumagai A."/>
            <person name="Itakura S."/>
            <person name="Fukuzumi Y."/>
            <person name="Fujimori Y."/>
            <person name="Komiyama M."/>
            <person name="Tashiro H."/>
            <person name="Tanigami A."/>
            <person name="Fujiwara T."/>
            <person name="Ono T."/>
            <person name="Yamada K."/>
            <person name="Fujii Y."/>
            <person name="Ozaki K."/>
            <person name="Hirao M."/>
            <person name="Ohmori Y."/>
            <person name="Kawabata A."/>
            <person name="Hikiji T."/>
            <person name="Kobatake N."/>
            <person name="Inagaki H."/>
            <person name="Ikema Y."/>
            <person name="Okamoto S."/>
            <person name="Okitani R."/>
            <person name="Kawakami T."/>
            <person name="Noguchi S."/>
            <person name="Itoh T."/>
            <person name="Shigeta K."/>
            <person name="Senba T."/>
            <person name="Matsumura K."/>
            <person name="Nakajima Y."/>
            <person name="Mizuno T."/>
            <person name="Morinaga M."/>
            <person name="Sasaki M."/>
            <person name="Togashi T."/>
            <person name="Oyama M."/>
            <person name="Hata H."/>
            <person name="Watanabe M."/>
            <person name="Komatsu T."/>
            <person name="Mizushima-Sugano J."/>
            <person name="Satoh T."/>
            <person name="Shirai Y."/>
            <person name="Takahashi Y."/>
            <person name="Nakagawa K."/>
            <person name="Okumura K."/>
            <person name="Nagase T."/>
            <person name="Nomura N."/>
            <person name="Kikuchi H."/>
            <person name="Masuho Y."/>
            <person name="Yamashita R."/>
            <person name="Nakai K."/>
            <person name="Yada T."/>
            <person name="Nakamura Y."/>
            <person name="Ohara O."/>
            <person name="Isogai T."/>
            <person name="Sugano S."/>
        </authorList>
    </citation>
    <scope>NUCLEOTIDE SEQUENCE [LARGE SCALE MRNA] (ISOFORM 4)</scope>
    <scope>NUCLEOTIDE SEQUENCE [LARGE SCALE MRNA] OF 601-1206 (ISOFORM 1)</scope>
    <source>
        <tissue>Teratocarcinoma</tissue>
        <tissue>Uterus</tissue>
    </source>
</reference>
<reference key="6">
    <citation type="journal article" date="2004" name="Nature">
        <title>The DNA sequence and comparative analysis of human chromosome 5.</title>
        <authorList>
            <person name="Schmutz J."/>
            <person name="Martin J."/>
            <person name="Terry A."/>
            <person name="Couronne O."/>
            <person name="Grimwood J."/>
            <person name="Lowry S."/>
            <person name="Gordon L.A."/>
            <person name="Scott D."/>
            <person name="Xie G."/>
            <person name="Huang W."/>
            <person name="Hellsten U."/>
            <person name="Tran-Gyamfi M."/>
            <person name="She X."/>
            <person name="Prabhakar S."/>
            <person name="Aerts A."/>
            <person name="Altherr M."/>
            <person name="Bajorek E."/>
            <person name="Black S."/>
            <person name="Branscomb E."/>
            <person name="Caoile C."/>
            <person name="Challacombe J.F."/>
            <person name="Chan Y.M."/>
            <person name="Denys M."/>
            <person name="Detter J.C."/>
            <person name="Escobar J."/>
            <person name="Flowers D."/>
            <person name="Fotopulos D."/>
            <person name="Glavina T."/>
            <person name="Gomez M."/>
            <person name="Gonzales E."/>
            <person name="Goodstein D."/>
            <person name="Grigoriev I."/>
            <person name="Groza M."/>
            <person name="Hammon N."/>
            <person name="Hawkins T."/>
            <person name="Haydu L."/>
            <person name="Israni S."/>
            <person name="Jett J."/>
            <person name="Kadner K."/>
            <person name="Kimball H."/>
            <person name="Kobayashi A."/>
            <person name="Lopez F."/>
            <person name="Lou Y."/>
            <person name="Martinez D."/>
            <person name="Medina C."/>
            <person name="Morgan J."/>
            <person name="Nandkeshwar R."/>
            <person name="Noonan J.P."/>
            <person name="Pitluck S."/>
            <person name="Pollard M."/>
            <person name="Predki P."/>
            <person name="Priest J."/>
            <person name="Ramirez L."/>
            <person name="Retterer J."/>
            <person name="Rodriguez A."/>
            <person name="Rogers S."/>
            <person name="Salamov A."/>
            <person name="Salazar A."/>
            <person name="Thayer N."/>
            <person name="Tice H."/>
            <person name="Tsai M."/>
            <person name="Ustaszewska A."/>
            <person name="Vo N."/>
            <person name="Wheeler J."/>
            <person name="Wu K."/>
            <person name="Yang J."/>
            <person name="Dickson M."/>
            <person name="Cheng J.-F."/>
            <person name="Eichler E.E."/>
            <person name="Olsen A."/>
            <person name="Pennacchio L.A."/>
            <person name="Rokhsar D.S."/>
            <person name="Richardson P."/>
            <person name="Lucas S.M."/>
            <person name="Myers R.M."/>
            <person name="Rubin E.M."/>
        </authorList>
    </citation>
    <scope>NUCLEOTIDE SEQUENCE [LARGE SCALE GENOMIC DNA]</scope>
</reference>
<reference key="7">
    <citation type="journal article" date="2004" name="Genome Res.">
        <title>The status, quality, and expansion of the NIH full-length cDNA project: the Mammalian Gene Collection (MGC).</title>
        <authorList>
            <consortium name="The MGC Project Team"/>
        </authorList>
    </citation>
    <scope>NUCLEOTIDE SEQUENCE [LARGE SCALE MRNA] (ISOFORMS 2; 8 AND 9)</scope>
    <scope>VARIANTS LEU-274 AND VAL-313</scope>
    <source>
        <tissue>Cerebellum</tissue>
        <tissue>Skin</tissue>
    </source>
</reference>
<reference key="8">
    <citation type="journal article" date="2002" name="J. Biol. Chem.">
        <title>The Erbin PDZ domain binds with high affinity and specificity to the carboxyl termini of delta-catenin and ARVCF.</title>
        <authorList>
            <person name="Laura R.P."/>
            <person name="Witt A.S."/>
            <person name="Held H.A."/>
            <person name="Gerstner R."/>
            <person name="Deshayes K."/>
            <person name="Koehler M.F.T."/>
            <person name="Kosik K.S."/>
            <person name="Sidhu S.S."/>
            <person name="Lasky L.A."/>
        </authorList>
    </citation>
    <scope>INTERACTION WITH DELTA CATENIN AND ARVCF</scope>
</reference>
<reference key="9">
    <citation type="journal article" date="2004" name="Anal. Chem.">
        <title>Robust phosphoproteomic profiling of tyrosine phosphorylation sites from human T cells using immobilized metal affinity chromatography and tandem mass spectrometry.</title>
        <authorList>
            <person name="Brill L.M."/>
            <person name="Salomon A.R."/>
            <person name="Ficarro S.B."/>
            <person name="Mukherji M."/>
            <person name="Stettler-Gill M."/>
            <person name="Peters E.C."/>
        </authorList>
    </citation>
    <scope>PHOSPHORYLATION [LARGE SCALE ANALYSIS] AT TYR-920</scope>
    <scope>IDENTIFICATION BY MASS SPECTROMETRY [LARGE SCALE ANALYSIS]</scope>
    <source>
        <tissue>Leukemic T-cell</tissue>
    </source>
</reference>
<reference key="10">
    <citation type="journal article" date="2005" name="J. Biol. Chem.">
        <title>A role for Erbin in the regulation of Nod2-dependent NF-kappaB signaling.</title>
        <authorList>
            <person name="McDonald C."/>
            <person name="Chen F.F."/>
            <person name="Ollendorff V."/>
            <person name="Ogura Y."/>
            <person name="Marchetto S."/>
            <person name="Lecine P."/>
            <person name="Borg J.P."/>
            <person name="Nunez G."/>
        </authorList>
    </citation>
    <scope>FUNCTION</scope>
    <scope>INTERACTION WITH NOD2</scope>
    <scope>SUBCELLULAR LOCATION</scope>
    <scope>IDENTIFICATION BY MASS SPECTROMETRY</scope>
</reference>
<reference key="11">
    <citation type="journal article" date="2005" name="Nat. Biotechnol.">
        <title>Immunoaffinity profiling of tyrosine phosphorylation in cancer cells.</title>
        <authorList>
            <person name="Rush J."/>
            <person name="Moritz A."/>
            <person name="Lee K.A."/>
            <person name="Guo A."/>
            <person name="Goss V.L."/>
            <person name="Spek E.J."/>
            <person name="Zhang H."/>
            <person name="Zha X.-M."/>
            <person name="Polakiewicz R.D."/>
            <person name="Comb M.J."/>
        </authorList>
    </citation>
    <scope>PHOSPHORYLATION [LARGE SCALE ANALYSIS] AT TYR-972</scope>
    <scope>IDENTIFICATION BY MASS SPECTROMETRY [LARGE SCALE ANALYSIS]</scope>
</reference>
<reference key="12">
    <citation type="journal article" date="2006" name="Cell">
        <title>Global, in vivo, and site-specific phosphorylation dynamics in signaling networks.</title>
        <authorList>
            <person name="Olsen J.V."/>
            <person name="Blagoev B."/>
            <person name="Gnad F."/>
            <person name="Macek B."/>
            <person name="Kumar C."/>
            <person name="Mortensen P."/>
            <person name="Mann M."/>
        </authorList>
    </citation>
    <scope>PHOSPHORYLATION [LARGE SCALE ANALYSIS] AT SER-440</scope>
    <scope>IDENTIFICATION BY MASS SPECTROMETRY [LARGE SCALE ANALYSIS]</scope>
    <source>
        <tissue>Cervix carcinoma</tissue>
    </source>
</reference>
<reference key="13">
    <citation type="journal article" date="2008" name="J. Proteome Res.">
        <title>Phosphoproteome of resting human platelets.</title>
        <authorList>
            <person name="Zahedi R.P."/>
            <person name="Lewandrowski U."/>
            <person name="Wiesner J."/>
            <person name="Wortelkamp S."/>
            <person name="Moebius J."/>
            <person name="Schuetz C."/>
            <person name="Walter U."/>
            <person name="Gambaryan S."/>
            <person name="Sickmann A."/>
        </authorList>
    </citation>
    <scope>IDENTIFICATION BY MASS SPECTROMETRY [LARGE SCALE ANALYSIS]</scope>
    <source>
        <tissue>Platelet</tissue>
    </source>
</reference>
<reference key="14">
    <citation type="journal article" date="2008" name="Proc. Natl. Acad. Sci. U.S.A.">
        <title>A quantitative atlas of mitotic phosphorylation.</title>
        <authorList>
            <person name="Dephoure N."/>
            <person name="Zhou C."/>
            <person name="Villen J."/>
            <person name="Beausoleil S.A."/>
            <person name="Bakalarski C.E."/>
            <person name="Elledge S.J."/>
            <person name="Gygi S.P."/>
        </authorList>
    </citation>
    <scope>PHOSPHORYLATION [LARGE SCALE ANALYSIS] AT SER-569; SER-857; THR-917 AND SER-1286</scope>
    <scope>IDENTIFICATION BY MASS SPECTROMETRY [LARGE SCALE ANALYSIS]</scope>
    <source>
        <tissue>Cervix carcinoma</tissue>
    </source>
</reference>
<reference key="15">
    <citation type="journal article" date="2009" name="Sci. Signal.">
        <title>Quantitative phosphoproteomic analysis of T cell receptor signaling reveals system-wide modulation of protein-protein interactions.</title>
        <authorList>
            <person name="Mayya V."/>
            <person name="Lundgren D.H."/>
            <person name="Hwang S.-I."/>
            <person name="Rezaul K."/>
            <person name="Wu L."/>
            <person name="Eng J.K."/>
            <person name="Rodionov V."/>
            <person name="Han D.K."/>
        </authorList>
    </citation>
    <scope>PHOSPHORYLATION [LARGE SCALE ANALYSIS] AT SER-872; THR-917; SER-931 AND SER-1158</scope>
    <scope>IDENTIFICATION BY MASS SPECTROMETRY [LARGE SCALE ANALYSIS]</scope>
    <source>
        <tissue>Leukemic T-cell</tissue>
    </source>
</reference>
<reference key="16">
    <citation type="journal article" date="2010" name="Sci. Signal.">
        <title>Quantitative phosphoproteomics reveals widespread full phosphorylation site occupancy during mitosis.</title>
        <authorList>
            <person name="Olsen J.V."/>
            <person name="Vermeulen M."/>
            <person name="Santamaria A."/>
            <person name="Kumar C."/>
            <person name="Miller M.L."/>
            <person name="Jensen L.J."/>
            <person name="Gnad F."/>
            <person name="Cox J."/>
            <person name="Jensen T.S."/>
            <person name="Nigg E.A."/>
            <person name="Brunak S."/>
            <person name="Mann M."/>
        </authorList>
    </citation>
    <scope>PHOSPHORYLATION [LARGE SCALE ANALYSIS] AT SER-569; SER-602 AND SER-603</scope>
    <scope>IDENTIFICATION BY MASS SPECTROMETRY [LARGE SCALE ANALYSIS]</scope>
    <source>
        <tissue>Cervix carcinoma</tissue>
    </source>
</reference>
<reference key="17">
    <citation type="journal article" date="2011" name="Sci. Signal.">
        <title>System-wide temporal characterization of the proteome and phosphoproteome of human embryonic stem cell differentiation.</title>
        <authorList>
            <person name="Rigbolt K.T."/>
            <person name="Prokhorova T.A."/>
            <person name="Akimov V."/>
            <person name="Henningsen J."/>
            <person name="Johansen P.T."/>
            <person name="Kratchmarova I."/>
            <person name="Kassem M."/>
            <person name="Mann M."/>
            <person name="Olsen J.V."/>
            <person name="Blagoev B."/>
        </authorList>
    </citation>
    <scope>IDENTIFICATION BY MASS SPECTROMETRY [LARGE SCALE ANALYSIS]</scope>
</reference>
<reference key="18">
    <citation type="journal article" date="2013" name="J. Proteome Res.">
        <title>Toward a comprehensive characterization of a human cancer cell phosphoproteome.</title>
        <authorList>
            <person name="Zhou H."/>
            <person name="Di Palma S."/>
            <person name="Preisinger C."/>
            <person name="Peng M."/>
            <person name="Polat A.N."/>
            <person name="Heck A.J."/>
            <person name="Mohammed S."/>
        </authorList>
    </citation>
    <scope>PHOSPHORYLATION [LARGE SCALE ANALYSIS] AT THR-485; SER-620; SER-872; SER-1158 AND SER-1179</scope>
    <scope>IDENTIFICATION BY MASS SPECTROMETRY [LARGE SCALE ANALYSIS]</scope>
    <source>
        <tissue>Cervix carcinoma</tissue>
        <tissue>Erythroleukemia</tissue>
    </source>
</reference>
<reference key="19">
    <citation type="journal article" date="2014" name="J. Proteomics">
        <title>An enzyme assisted RP-RPLC approach for in-depth analysis of human liver phosphoproteome.</title>
        <authorList>
            <person name="Bian Y."/>
            <person name="Song C."/>
            <person name="Cheng K."/>
            <person name="Dong M."/>
            <person name="Wang F."/>
            <person name="Huang J."/>
            <person name="Sun D."/>
            <person name="Wang L."/>
            <person name="Ye M."/>
            <person name="Zou H."/>
        </authorList>
    </citation>
    <scope>PHOSPHORYLATION [LARGE SCALE ANALYSIS] AT THR-485 AND SER-852</scope>
    <scope>IDENTIFICATION BY MASS SPECTROMETRY [LARGE SCALE ANALYSIS]</scope>
    <source>
        <tissue>Liver</tissue>
    </source>
</reference>
<reference key="20">
    <citation type="journal article" date="2015" name="Proteomics">
        <title>N-terminome analysis of the human mitochondrial proteome.</title>
        <authorList>
            <person name="Vaca Jacome A.S."/>
            <person name="Rabilloud T."/>
            <person name="Schaeffer-Reiss C."/>
            <person name="Rompais M."/>
            <person name="Ayoub D."/>
            <person name="Lane L."/>
            <person name="Bairoch A."/>
            <person name="Van Dorsselaer A."/>
            <person name="Carapito C."/>
        </authorList>
    </citation>
    <scope>IDENTIFICATION BY MASS SPECTROMETRY [LARGE SCALE ANALYSIS]</scope>
</reference>
<reference key="21">
    <citation type="journal article" date="2003" name="J. Biol. Chem.">
        <title>Novel mode of ligand recognition by the Erbin PDZ domain.</title>
        <authorList>
            <person name="Birrane G."/>
            <person name="Chung J."/>
            <person name="Ladias J.A."/>
        </authorList>
    </citation>
    <scope>X-RAY CRYSTALLOGRAPHY (1.25 ANGSTROMS) OF 1321-1412 IN COMPLEX WITH ERBB2 C-TERMINUS</scope>
</reference>
<reference key="22">
    <citation type="journal article" date="2003" name="J. Biol. Chem.">
        <title>Origins of PDZ domain ligand specificity. Structure determination and mutagenesis of the Erbin PDZ domain.</title>
        <authorList>
            <person name="Skelton N.J."/>
            <person name="Koehler M.F.T."/>
            <person name="Zobel K."/>
            <person name="Wong W.L."/>
            <person name="Yeh S."/>
            <person name="Pisabarro M.T."/>
            <person name="Yin J.P."/>
            <person name="Lasky L.A."/>
            <person name="Sidhu S.S."/>
        </authorList>
    </citation>
    <scope>STRUCTURE BY NMR OF 1314-1412 IN COMPLEX WITH PHAGE-DERIVED PEPTIDE</scope>
</reference>
<reference key="23">
    <citation type="journal article" date="2006" name="J. Biol. Chem.">
        <title>Comparative structural analysis of the erbin PDZ domain and the first PDZ domain of ZO-1. Insights into determinants of PDZ domain specificity.</title>
        <authorList>
            <person name="Appleton B.A."/>
            <person name="Zhang Y."/>
            <person name="Wu P."/>
            <person name="Yin J.P."/>
            <person name="Hunziker W."/>
            <person name="Skelton N.J."/>
            <person name="Sidhu S.S."/>
            <person name="Wiesmann C."/>
        </authorList>
    </citation>
    <scope>X-RAY CRYSTALLOGRAPHY (1.0 ANGSTROMS) OF 1314-1412</scope>
</reference>
<organism>
    <name type="scientific">Homo sapiens</name>
    <name type="common">Human</name>
    <dbReference type="NCBI Taxonomy" id="9606"/>
    <lineage>
        <taxon>Eukaryota</taxon>
        <taxon>Metazoa</taxon>
        <taxon>Chordata</taxon>
        <taxon>Craniata</taxon>
        <taxon>Vertebrata</taxon>
        <taxon>Euteleostomi</taxon>
        <taxon>Mammalia</taxon>
        <taxon>Eutheria</taxon>
        <taxon>Euarchontoglires</taxon>
        <taxon>Primates</taxon>
        <taxon>Haplorrhini</taxon>
        <taxon>Catarrhini</taxon>
        <taxon>Hominidae</taxon>
        <taxon>Homo</taxon>
    </lineage>
</organism>
<dbReference type="EMBL" id="AF263744">
    <property type="protein sequence ID" value="AAF77048.1"/>
    <property type="molecule type" value="mRNA"/>
</dbReference>
<dbReference type="EMBL" id="AF276423">
    <property type="protein sequence ID" value="AAK69431.1"/>
    <property type="molecule type" value="mRNA"/>
</dbReference>
<dbReference type="EMBL" id="AB033051">
    <property type="protein sequence ID" value="BAA86539.2"/>
    <property type="molecule type" value="mRNA"/>
</dbReference>
<dbReference type="EMBL" id="AK001180">
    <property type="protein sequence ID" value="BAA91538.1"/>
    <property type="status" value="ALT_INIT"/>
    <property type="molecule type" value="mRNA"/>
</dbReference>
<dbReference type="EMBL" id="AK304693">
    <property type="protein sequence ID" value="BAG65463.1"/>
    <property type="molecule type" value="mRNA"/>
</dbReference>
<dbReference type="EMBL" id="AC010359">
    <property type="status" value="NOT_ANNOTATED_CDS"/>
    <property type="molecule type" value="Genomic_DNA"/>
</dbReference>
<dbReference type="EMBL" id="AC025442">
    <property type="status" value="NOT_ANNOTATED_CDS"/>
    <property type="molecule type" value="Genomic_DNA"/>
</dbReference>
<dbReference type="EMBL" id="BC050692">
    <property type="protein sequence ID" value="AAH50692.1"/>
    <property type="status" value="ALT_SEQ"/>
    <property type="molecule type" value="mRNA"/>
</dbReference>
<dbReference type="EMBL" id="BC115012">
    <property type="protein sequence ID" value="AAI15013.1"/>
    <property type="molecule type" value="mRNA"/>
</dbReference>
<dbReference type="EMBL" id="BC126464">
    <property type="protein sequence ID" value="AAI26465.1"/>
    <property type="molecule type" value="mRNA"/>
</dbReference>
<dbReference type="EMBL" id="BC144075">
    <property type="protein sequence ID" value="AAI44076.1"/>
    <property type="molecule type" value="mRNA"/>
</dbReference>
<dbReference type="CCDS" id="CCDS34172.1">
    <molecule id="Q96RT1-7"/>
</dbReference>
<dbReference type="CCDS" id="CCDS3990.1">
    <molecule id="Q96RT1-2"/>
</dbReference>
<dbReference type="CCDS" id="CCDS58951.1">
    <molecule id="Q96RT1-9"/>
</dbReference>
<dbReference type="CCDS" id="CCDS58952.1">
    <molecule id="Q96RT1-8"/>
</dbReference>
<dbReference type="CCDS" id="CCDS58953.1">
    <molecule id="Q96RT1-1"/>
</dbReference>
<dbReference type="CCDS" id="CCDS58954.1">
    <molecule id="Q96RT1-4"/>
</dbReference>
<dbReference type="RefSeq" id="NP_001006600.1">
    <molecule id="Q96RT1-7"/>
    <property type="nucleotide sequence ID" value="NM_001006600.3"/>
</dbReference>
<dbReference type="RefSeq" id="NP_001240626.1">
    <molecule id="Q96RT1-1"/>
    <property type="nucleotide sequence ID" value="NM_001253697.2"/>
</dbReference>
<dbReference type="RefSeq" id="NP_001240627.1">
    <molecule id="Q96RT1-4"/>
    <property type="nucleotide sequence ID" value="NM_001253698.2"/>
</dbReference>
<dbReference type="RefSeq" id="NP_001240628.1">
    <molecule id="Q96RT1-8"/>
    <property type="nucleotide sequence ID" value="NM_001253699.2"/>
</dbReference>
<dbReference type="RefSeq" id="NP_001240630.1">
    <molecule id="Q96RT1-9"/>
    <property type="nucleotide sequence ID" value="NM_001253701.2"/>
</dbReference>
<dbReference type="RefSeq" id="NP_061165.1">
    <molecule id="Q96RT1-2"/>
    <property type="nucleotide sequence ID" value="NM_018695.4"/>
</dbReference>
<dbReference type="RefSeq" id="XP_047273334.1">
    <molecule id="Q96RT1-8"/>
    <property type="nucleotide sequence ID" value="XM_047417378.1"/>
</dbReference>
<dbReference type="RefSeq" id="XP_047273336.1">
    <molecule id="Q96RT1-1"/>
    <property type="nucleotide sequence ID" value="XM_047417380.1"/>
</dbReference>
<dbReference type="RefSeq" id="XP_047273338.1">
    <molecule id="Q96RT1-2"/>
    <property type="nucleotide sequence ID" value="XM_047417382.1"/>
</dbReference>
<dbReference type="RefSeq" id="XP_047273339.1">
    <molecule id="Q96RT1-9"/>
    <property type="nucleotide sequence ID" value="XM_047417383.1"/>
</dbReference>
<dbReference type="RefSeq" id="XP_047273340.1">
    <molecule id="Q96RT1-7"/>
    <property type="nucleotide sequence ID" value="XM_047417384.1"/>
</dbReference>
<dbReference type="RefSeq" id="XP_054208902.1">
    <molecule id="Q96RT1-1"/>
    <property type="nucleotide sequence ID" value="XM_054352927.1"/>
</dbReference>
<dbReference type="RefSeq" id="XP_054208904.1">
    <molecule id="Q96RT1-2"/>
    <property type="nucleotide sequence ID" value="XM_054352929.1"/>
</dbReference>
<dbReference type="RefSeq" id="XP_054208905.1">
    <molecule id="Q96RT1-9"/>
    <property type="nucleotide sequence ID" value="XM_054352930.1"/>
</dbReference>
<dbReference type="RefSeq" id="XP_054208906.1">
    <molecule id="Q96RT1-7"/>
    <property type="nucleotide sequence ID" value="XM_054352931.1"/>
</dbReference>
<dbReference type="PDB" id="1MFG">
    <property type="method" value="X-ray"/>
    <property type="resolution" value="1.25 A"/>
    <property type="chains" value="A=1321-1412"/>
</dbReference>
<dbReference type="PDB" id="1MFL">
    <property type="method" value="X-ray"/>
    <property type="resolution" value="1.88 A"/>
    <property type="chains" value="A=1321-1412"/>
</dbReference>
<dbReference type="PDB" id="1N7T">
    <property type="method" value="NMR"/>
    <property type="chains" value="A=1314-1412"/>
</dbReference>
<dbReference type="PDB" id="2H3L">
    <property type="method" value="X-ray"/>
    <property type="resolution" value="1.00 A"/>
    <property type="chains" value="A/B=1314-1412"/>
</dbReference>
<dbReference type="PDB" id="2QBW">
    <property type="method" value="X-ray"/>
    <property type="resolution" value="1.80 A"/>
    <property type="chains" value="A=1330-1410"/>
</dbReference>
<dbReference type="PDB" id="3CH8">
    <property type="method" value="X-ray"/>
    <property type="resolution" value="1.90 A"/>
    <property type="chains" value="A=1330-1410"/>
</dbReference>
<dbReference type="PDB" id="6Q0M">
    <property type="method" value="X-ray"/>
    <property type="resolution" value="1.20 A"/>
    <property type="chains" value="A/B=1321-1410"/>
</dbReference>
<dbReference type="PDB" id="6Q0N">
    <property type="method" value="X-ray"/>
    <property type="resolution" value="1.18 A"/>
    <property type="chains" value="A/B=1321-1410"/>
</dbReference>
<dbReference type="PDB" id="6Q0U">
    <property type="method" value="X-ray"/>
    <property type="resolution" value="1.89 A"/>
    <property type="chains" value="A/B=1321-1410"/>
</dbReference>
<dbReference type="PDB" id="6UBH">
    <property type="method" value="X-ray"/>
    <property type="resolution" value="1.80 A"/>
    <property type="chains" value="A/B/C/D=1321-1412"/>
</dbReference>
<dbReference type="PDB" id="7LUL">
    <property type="method" value="X-ray"/>
    <property type="resolution" value="1.65 A"/>
    <property type="chains" value="A=1321-1412"/>
</dbReference>
<dbReference type="PDBsum" id="1MFG"/>
<dbReference type="PDBsum" id="1MFL"/>
<dbReference type="PDBsum" id="1N7T"/>
<dbReference type="PDBsum" id="2H3L"/>
<dbReference type="PDBsum" id="2QBW"/>
<dbReference type="PDBsum" id="3CH8"/>
<dbReference type="PDBsum" id="6Q0M"/>
<dbReference type="PDBsum" id="6Q0N"/>
<dbReference type="PDBsum" id="6Q0U"/>
<dbReference type="PDBsum" id="6UBH"/>
<dbReference type="PDBsum" id="7LUL"/>
<dbReference type="BMRB" id="Q96RT1"/>
<dbReference type="SMR" id="Q96RT1"/>
<dbReference type="BioGRID" id="120997">
    <property type="interactions" value="272"/>
</dbReference>
<dbReference type="ELM" id="Q96RT1"/>
<dbReference type="FunCoup" id="Q96RT1">
    <property type="interactions" value="2217"/>
</dbReference>
<dbReference type="IntAct" id="Q96RT1">
    <property type="interactions" value="199"/>
</dbReference>
<dbReference type="MINT" id="Q96RT1"/>
<dbReference type="STRING" id="9606.ENSP00000426632"/>
<dbReference type="GlyGen" id="Q96RT1">
    <property type="glycosylation" value="2 sites, 1 O-linked glycan (2 sites)"/>
</dbReference>
<dbReference type="iPTMnet" id="Q96RT1"/>
<dbReference type="MetOSite" id="Q96RT1"/>
<dbReference type="PhosphoSitePlus" id="Q96RT1"/>
<dbReference type="SwissPalm" id="Q96RT1"/>
<dbReference type="BioMuta" id="ERBIN"/>
<dbReference type="DMDM" id="116242614"/>
<dbReference type="jPOST" id="Q96RT1"/>
<dbReference type="MassIVE" id="Q96RT1"/>
<dbReference type="PaxDb" id="9606-ENSP00000426632"/>
<dbReference type="PeptideAtlas" id="Q96RT1"/>
<dbReference type="ProteomicsDB" id="17666"/>
<dbReference type="ProteomicsDB" id="19501"/>
<dbReference type="ProteomicsDB" id="78021">
    <molecule id="Q96RT1-1"/>
</dbReference>
<dbReference type="ProteomicsDB" id="78022">
    <molecule id="Q96RT1-2"/>
</dbReference>
<dbReference type="ProteomicsDB" id="78023">
    <molecule id="Q96RT1-3"/>
</dbReference>
<dbReference type="ProteomicsDB" id="78024">
    <molecule id="Q96RT1-4"/>
</dbReference>
<dbReference type="ProteomicsDB" id="78025">
    <molecule id="Q96RT1-5"/>
</dbReference>
<dbReference type="ProteomicsDB" id="78026">
    <molecule id="Q96RT1-6"/>
</dbReference>
<dbReference type="ProteomicsDB" id="78027">
    <molecule id="Q96RT1-7"/>
</dbReference>
<dbReference type="Pumba" id="Q96RT1"/>
<dbReference type="Antibodypedia" id="23812">
    <property type="antibodies" value="194 antibodies from 32 providers"/>
</dbReference>
<dbReference type="DNASU" id="55914"/>
<dbReference type="Ensembl" id="ENST00000284037.10">
    <molecule id="Q96RT1-1"/>
    <property type="protein sequence ID" value="ENSP00000284037.4"/>
    <property type="gene ID" value="ENSG00000112851.16"/>
</dbReference>
<dbReference type="Ensembl" id="ENST00000380938.6">
    <molecule id="Q96RT1-4"/>
    <property type="protein sequence ID" value="ENSP00000370325.2"/>
    <property type="gene ID" value="ENSG00000112851.16"/>
</dbReference>
<dbReference type="Ensembl" id="ENST00000380943.6">
    <molecule id="Q96RT1-2"/>
    <property type="protein sequence ID" value="ENSP00000370330.2"/>
    <property type="gene ID" value="ENSG00000112851.16"/>
</dbReference>
<dbReference type="Ensembl" id="ENST00000506030.6">
    <molecule id="Q96RT1-8"/>
    <property type="protein sequence ID" value="ENSP00000426632.1"/>
    <property type="gene ID" value="ENSG00000112851.16"/>
</dbReference>
<dbReference type="Ensembl" id="ENST00000508515.2">
    <molecule id="Q96RT1-7"/>
    <property type="protein sequence ID" value="ENSP00000422015.1"/>
    <property type="gene ID" value="ENSG00000112851.16"/>
</dbReference>
<dbReference type="Ensembl" id="ENST00000511297.5">
    <molecule id="Q96RT1-9"/>
    <property type="protein sequence ID" value="ENSP00000422766.1"/>
    <property type="gene ID" value="ENSG00000112851.16"/>
</dbReference>
<dbReference type="Ensembl" id="ENST00000699000.1">
    <molecule id="Q96RT1-2"/>
    <property type="protein sequence ID" value="ENSP00000514078.1"/>
    <property type="gene ID" value="ENSG00000112851.16"/>
</dbReference>
<dbReference type="Ensembl" id="ENST00000699001.1">
    <molecule id="Q96RT1-7"/>
    <property type="protein sequence ID" value="ENSP00000514079.1"/>
    <property type="gene ID" value="ENSG00000112851.16"/>
</dbReference>
<dbReference type="GeneID" id="55914"/>
<dbReference type="KEGG" id="hsa:55914"/>
<dbReference type="MANE-Select" id="ENST00000284037.10">
    <property type="protein sequence ID" value="ENSP00000284037.4"/>
    <property type="RefSeq nucleotide sequence ID" value="NM_001253697.2"/>
    <property type="RefSeq protein sequence ID" value="NP_001240626.1"/>
</dbReference>
<dbReference type="UCSC" id="uc003jui.3">
    <molecule id="Q96RT1-1"/>
    <property type="organism name" value="human"/>
</dbReference>
<dbReference type="AGR" id="HGNC:15842"/>
<dbReference type="CTD" id="55914"/>
<dbReference type="DisGeNET" id="55914"/>
<dbReference type="GeneCards" id="ERBIN"/>
<dbReference type="HGNC" id="HGNC:15842">
    <property type="gene designation" value="ERBIN"/>
</dbReference>
<dbReference type="HPA" id="ENSG00000112851">
    <property type="expression patterns" value="Low tissue specificity"/>
</dbReference>
<dbReference type="MalaCards" id="ERBIN"/>
<dbReference type="MIM" id="606944">
    <property type="type" value="gene"/>
</dbReference>
<dbReference type="neXtProt" id="NX_Q96RT1"/>
<dbReference type="OpenTargets" id="ENSG00000112851"/>
<dbReference type="Orphanet" id="656912">
    <property type="disease" value="Autosomal dominant combined immunodeficiency due to ERBIN deficiency"/>
</dbReference>
<dbReference type="PharmGKB" id="PA27845"/>
<dbReference type="VEuPathDB" id="HostDB:ENSG00000112851"/>
<dbReference type="eggNOG" id="KOG0619">
    <property type="taxonomic scope" value="Eukaryota"/>
</dbReference>
<dbReference type="GeneTree" id="ENSGT00940000159526"/>
<dbReference type="HOGENOM" id="CLU_004220_1_0_1"/>
<dbReference type="InParanoid" id="Q96RT1"/>
<dbReference type="OMA" id="PIANHED"/>
<dbReference type="OrthoDB" id="2187496at2759"/>
<dbReference type="PAN-GO" id="Q96RT1">
    <property type="GO annotations" value="6 GO annotations based on evolutionary models"/>
</dbReference>
<dbReference type="PhylomeDB" id="Q96RT1"/>
<dbReference type="TreeFam" id="TF351429"/>
<dbReference type="PathwayCommons" id="Q96RT1"/>
<dbReference type="Reactome" id="R-HSA-1227986">
    <property type="pathway name" value="Signaling by ERBB2"/>
</dbReference>
<dbReference type="Reactome" id="R-HSA-8863795">
    <property type="pathway name" value="Downregulation of ERBB2 signaling"/>
</dbReference>
<dbReference type="Reactome" id="R-HSA-8980692">
    <property type="pathway name" value="RHOA GTPase cycle"/>
</dbReference>
<dbReference type="Reactome" id="R-HSA-9013026">
    <property type="pathway name" value="RHOB GTPase cycle"/>
</dbReference>
<dbReference type="Reactome" id="R-HSA-9013106">
    <property type="pathway name" value="RHOC GTPase cycle"/>
</dbReference>
<dbReference type="Reactome" id="R-HSA-9013149">
    <property type="pathway name" value="RAC1 GTPase cycle"/>
</dbReference>
<dbReference type="Reactome" id="R-HSA-9013404">
    <property type="pathway name" value="RAC2 GTPase cycle"/>
</dbReference>
<dbReference type="Reactome" id="R-HSA-9013408">
    <property type="pathway name" value="RHOG GTPase cycle"/>
</dbReference>
<dbReference type="Reactome" id="R-HSA-9013423">
    <property type="pathway name" value="RAC3 GTPase cycle"/>
</dbReference>
<dbReference type="Reactome" id="R-HSA-9634285">
    <property type="pathway name" value="Constitutive Signaling by Overexpressed ERBB2"/>
</dbReference>
<dbReference type="Reactome" id="R-HSA-9652282">
    <property type="pathway name" value="Drug-mediated inhibition of ERBB2 signaling"/>
</dbReference>
<dbReference type="Reactome" id="R-HSA-9664565">
    <property type="pathway name" value="Signaling by ERBB2 KD Mutants"/>
</dbReference>
<dbReference type="Reactome" id="R-HSA-9665233">
    <property type="pathway name" value="Resistance of ERBB2 KD mutants to trastuzumab"/>
</dbReference>
<dbReference type="Reactome" id="R-HSA-9665244">
    <property type="pathway name" value="Resistance of ERBB2 KD mutants to sapitinib"/>
</dbReference>
<dbReference type="Reactome" id="R-HSA-9665245">
    <property type="pathway name" value="Resistance of ERBB2 KD mutants to tesevatinib"/>
</dbReference>
<dbReference type="Reactome" id="R-HSA-9665246">
    <property type="pathway name" value="Resistance of ERBB2 KD mutants to neratinib"/>
</dbReference>
<dbReference type="Reactome" id="R-HSA-9665247">
    <property type="pathway name" value="Resistance of ERBB2 KD mutants to osimertinib"/>
</dbReference>
<dbReference type="Reactome" id="R-HSA-9665249">
    <property type="pathway name" value="Resistance of ERBB2 KD mutants to afatinib"/>
</dbReference>
<dbReference type="Reactome" id="R-HSA-9665250">
    <property type="pathway name" value="Resistance of ERBB2 KD mutants to AEE788"/>
</dbReference>
<dbReference type="Reactome" id="R-HSA-9665251">
    <property type="pathway name" value="Resistance of ERBB2 KD mutants to lapatinib"/>
</dbReference>
<dbReference type="Reactome" id="R-HSA-9665348">
    <property type="pathway name" value="Signaling by ERBB2 ECD mutants"/>
</dbReference>
<dbReference type="Reactome" id="R-HSA-9665686">
    <property type="pathway name" value="Signaling by ERBB2 TMD/JMD mutants"/>
</dbReference>
<dbReference type="Reactome" id="R-HSA-9665737">
    <property type="pathway name" value="Drug resistance in ERBB2 TMD/JMD mutants"/>
</dbReference>
<dbReference type="SignaLink" id="Q96RT1"/>
<dbReference type="SIGNOR" id="Q96RT1"/>
<dbReference type="BioGRID-ORCS" id="55914">
    <property type="hits" value="13 hits in 1147 CRISPR screens"/>
</dbReference>
<dbReference type="CD-CODE" id="FB4E32DD">
    <property type="entry name" value="Presynaptic clusters and postsynaptic densities"/>
</dbReference>
<dbReference type="ChiTaRS" id="ERBIN">
    <property type="organism name" value="human"/>
</dbReference>
<dbReference type="EvolutionaryTrace" id="Q96RT1"/>
<dbReference type="GeneWiki" id="Erbin_(protein)"/>
<dbReference type="GenomeRNAi" id="55914"/>
<dbReference type="Pharos" id="Q96RT1">
    <property type="development level" value="Tbio"/>
</dbReference>
<dbReference type="PRO" id="PR:Q96RT1"/>
<dbReference type="Proteomes" id="UP000005640">
    <property type="component" value="Chromosome 5"/>
</dbReference>
<dbReference type="RNAct" id="Q96RT1">
    <property type="molecule type" value="protein"/>
</dbReference>
<dbReference type="Bgee" id="ENSG00000112851">
    <property type="expression patterns" value="Expressed in corpus callosum and 210 other cell types or tissues"/>
</dbReference>
<dbReference type="ExpressionAtlas" id="Q96RT1">
    <property type="expression patterns" value="baseline and differential"/>
</dbReference>
<dbReference type="GO" id="GO:0009925">
    <property type="term" value="C:basal plasma membrane"/>
    <property type="evidence" value="ECO:0000303"/>
    <property type="project" value="UniProtKB"/>
</dbReference>
<dbReference type="GO" id="GO:0005604">
    <property type="term" value="C:basement membrane"/>
    <property type="evidence" value="ECO:0000304"/>
    <property type="project" value="ProtInc"/>
</dbReference>
<dbReference type="GO" id="GO:0016323">
    <property type="term" value="C:basolateral plasma membrane"/>
    <property type="evidence" value="ECO:0000314"/>
    <property type="project" value="UniProtKB"/>
</dbReference>
<dbReference type="GO" id="GO:0030054">
    <property type="term" value="C:cell junction"/>
    <property type="evidence" value="ECO:0000314"/>
    <property type="project" value="HPA"/>
</dbReference>
<dbReference type="GO" id="GO:0005737">
    <property type="term" value="C:cytoplasm"/>
    <property type="evidence" value="ECO:0000314"/>
    <property type="project" value="UniProtKB"/>
</dbReference>
<dbReference type="GO" id="GO:0098978">
    <property type="term" value="C:glutamatergic synapse"/>
    <property type="evidence" value="ECO:0007669"/>
    <property type="project" value="Ensembl"/>
</dbReference>
<dbReference type="GO" id="GO:0030056">
    <property type="term" value="C:hemidesmosome"/>
    <property type="evidence" value="ECO:0000314"/>
    <property type="project" value="UniProtKB"/>
</dbReference>
<dbReference type="GO" id="GO:0031594">
    <property type="term" value="C:neuromuscular junction"/>
    <property type="evidence" value="ECO:0007669"/>
    <property type="project" value="Ensembl"/>
</dbReference>
<dbReference type="GO" id="GO:0031965">
    <property type="term" value="C:nuclear membrane"/>
    <property type="evidence" value="ECO:0007669"/>
    <property type="project" value="UniProtKB-SubCell"/>
</dbReference>
<dbReference type="GO" id="GO:0016607">
    <property type="term" value="C:nuclear speck"/>
    <property type="evidence" value="ECO:0000314"/>
    <property type="project" value="HPA"/>
</dbReference>
<dbReference type="GO" id="GO:0005634">
    <property type="term" value="C:nucleus"/>
    <property type="evidence" value="ECO:0000314"/>
    <property type="project" value="UniProtKB"/>
</dbReference>
<dbReference type="GO" id="GO:0005886">
    <property type="term" value="C:plasma membrane"/>
    <property type="evidence" value="ECO:0000314"/>
    <property type="project" value="HPA"/>
</dbReference>
<dbReference type="GO" id="GO:0099572">
    <property type="term" value="C:postsynaptic specialization"/>
    <property type="evidence" value="ECO:0007669"/>
    <property type="project" value="Ensembl"/>
</dbReference>
<dbReference type="GO" id="GO:0005176">
    <property type="term" value="F:ErbB-2 class receptor binding"/>
    <property type="evidence" value="ECO:0000304"/>
    <property type="project" value="UniProtKB"/>
</dbReference>
<dbReference type="GO" id="GO:0005102">
    <property type="term" value="F:signaling receptor binding"/>
    <property type="evidence" value="ECO:0000353"/>
    <property type="project" value="UniProtKB"/>
</dbReference>
<dbReference type="GO" id="GO:0005200">
    <property type="term" value="F:structural constituent of cytoskeleton"/>
    <property type="evidence" value="ECO:0000303"/>
    <property type="project" value="UniProtKB"/>
</dbReference>
<dbReference type="GO" id="GO:0045175">
    <property type="term" value="P:basal protein localization"/>
    <property type="evidence" value="ECO:0000303"/>
    <property type="project" value="UniProtKB"/>
</dbReference>
<dbReference type="GO" id="GO:0007155">
    <property type="term" value="P:cell adhesion"/>
    <property type="evidence" value="ECO:0000303"/>
    <property type="project" value="UniProtKB"/>
</dbReference>
<dbReference type="GO" id="GO:0071356">
    <property type="term" value="P:cellular response to tumor necrosis factor"/>
    <property type="evidence" value="ECO:0000315"/>
    <property type="project" value="UniProtKB"/>
</dbReference>
<dbReference type="GO" id="GO:0007173">
    <property type="term" value="P:epidermal growth factor receptor signaling pathway"/>
    <property type="evidence" value="ECO:0000304"/>
    <property type="project" value="UniProtKB"/>
</dbReference>
<dbReference type="GO" id="GO:0045197">
    <property type="term" value="P:establishment or maintenance of epithelial cell apical/basal polarity"/>
    <property type="evidence" value="ECO:0000303"/>
    <property type="project" value="UniProtKB"/>
</dbReference>
<dbReference type="GO" id="GO:0007229">
    <property type="term" value="P:integrin-mediated signaling pathway"/>
    <property type="evidence" value="ECO:0000303"/>
    <property type="project" value="UniProtKB"/>
</dbReference>
<dbReference type="GO" id="GO:0045104">
    <property type="term" value="P:intermediate filament cytoskeleton organization"/>
    <property type="evidence" value="ECO:0000303"/>
    <property type="project" value="UniProtKB"/>
</dbReference>
<dbReference type="GO" id="GO:0035556">
    <property type="term" value="P:intracellular signal transduction"/>
    <property type="evidence" value="ECO:0000318"/>
    <property type="project" value="GO_Central"/>
</dbReference>
<dbReference type="GO" id="GO:0071638">
    <property type="term" value="P:negative regulation of monocyte chemotactic protein-1 production"/>
    <property type="evidence" value="ECO:0007669"/>
    <property type="project" value="Ensembl"/>
</dbReference>
<dbReference type="GO" id="GO:0032088">
    <property type="term" value="P:negative regulation of NF-kappaB transcription factor activity"/>
    <property type="evidence" value="ECO:0000315"/>
    <property type="project" value="UniProtKB"/>
</dbReference>
<dbReference type="GO" id="GO:0070433">
    <property type="term" value="P:negative regulation of nucleotide-binding oligomerization domain containing 2 signaling pathway"/>
    <property type="evidence" value="ECO:0000315"/>
    <property type="project" value="UniProtKB"/>
</dbReference>
<dbReference type="GO" id="GO:0006605">
    <property type="term" value="P:protein targeting"/>
    <property type="evidence" value="ECO:0007669"/>
    <property type="project" value="Ensembl"/>
</dbReference>
<dbReference type="GO" id="GO:0099072">
    <property type="term" value="P:regulation of postsynaptic membrane neurotransmitter receptor levels"/>
    <property type="evidence" value="ECO:0007669"/>
    <property type="project" value="Ensembl"/>
</dbReference>
<dbReference type="GO" id="GO:0032496">
    <property type="term" value="P:response to lipopolysaccharide"/>
    <property type="evidence" value="ECO:0000315"/>
    <property type="project" value="UniProtKB"/>
</dbReference>
<dbReference type="GO" id="GO:0032495">
    <property type="term" value="P:response to muramyl dipeptide"/>
    <property type="evidence" value="ECO:0000315"/>
    <property type="project" value="UniProtKB"/>
</dbReference>
<dbReference type="GO" id="GO:0007165">
    <property type="term" value="P:signal transduction"/>
    <property type="evidence" value="ECO:0000304"/>
    <property type="project" value="ProtInc"/>
</dbReference>
<dbReference type="CDD" id="cd06749">
    <property type="entry name" value="PDZ_densin_erbin-like"/>
    <property type="match status" value="1"/>
</dbReference>
<dbReference type="FunFam" id="2.30.42.10:FF:000036">
    <property type="entry name" value="Erbin isoform 7"/>
    <property type="match status" value="1"/>
</dbReference>
<dbReference type="FunFam" id="3.80.10.10:FF:000013">
    <property type="entry name" value="Erbin isoform 7"/>
    <property type="match status" value="1"/>
</dbReference>
<dbReference type="FunFam" id="3.80.10.10:FF:000020">
    <property type="entry name" value="Erbin isoform 7"/>
    <property type="match status" value="1"/>
</dbReference>
<dbReference type="FunFam" id="3.80.10.10:FF:000022">
    <property type="entry name" value="Erbin isoform 7"/>
    <property type="match status" value="1"/>
</dbReference>
<dbReference type="Gene3D" id="2.30.42.10">
    <property type="match status" value="1"/>
</dbReference>
<dbReference type="Gene3D" id="3.80.10.10">
    <property type="entry name" value="Ribonuclease Inhibitor"/>
    <property type="match status" value="3"/>
</dbReference>
<dbReference type="IDEAL" id="IID00494"/>
<dbReference type="InterPro" id="IPR001611">
    <property type="entry name" value="Leu-rich_rpt"/>
</dbReference>
<dbReference type="InterPro" id="IPR003591">
    <property type="entry name" value="Leu-rich_rpt_typical-subtyp"/>
</dbReference>
<dbReference type="InterPro" id="IPR032675">
    <property type="entry name" value="LRR_dom_sf"/>
</dbReference>
<dbReference type="InterPro" id="IPR055414">
    <property type="entry name" value="LRR_R13L4/SHOC2-like"/>
</dbReference>
<dbReference type="InterPro" id="IPR001478">
    <property type="entry name" value="PDZ"/>
</dbReference>
<dbReference type="InterPro" id="IPR036034">
    <property type="entry name" value="PDZ_sf"/>
</dbReference>
<dbReference type="InterPro" id="IPR050614">
    <property type="entry name" value="Synaptic_Scaffolding_LAP-MAGUK"/>
</dbReference>
<dbReference type="PANTHER" id="PTHR23119">
    <property type="entry name" value="DISCS LARGE"/>
    <property type="match status" value="1"/>
</dbReference>
<dbReference type="PANTHER" id="PTHR23119:SF46">
    <property type="entry name" value="ERBB2 INTERACTING PROTEIN"/>
    <property type="match status" value="1"/>
</dbReference>
<dbReference type="Pfam" id="PF23598">
    <property type="entry name" value="LRR_14"/>
    <property type="match status" value="1"/>
</dbReference>
<dbReference type="Pfam" id="PF13855">
    <property type="entry name" value="LRR_8"/>
    <property type="match status" value="2"/>
</dbReference>
<dbReference type="Pfam" id="PF00595">
    <property type="entry name" value="PDZ"/>
    <property type="match status" value="1"/>
</dbReference>
<dbReference type="SMART" id="SM00364">
    <property type="entry name" value="LRR_BAC"/>
    <property type="match status" value="9"/>
</dbReference>
<dbReference type="SMART" id="SM00365">
    <property type="entry name" value="LRR_SD22"/>
    <property type="match status" value="7"/>
</dbReference>
<dbReference type="SMART" id="SM00369">
    <property type="entry name" value="LRR_TYP"/>
    <property type="match status" value="12"/>
</dbReference>
<dbReference type="SMART" id="SM00228">
    <property type="entry name" value="PDZ"/>
    <property type="match status" value="1"/>
</dbReference>
<dbReference type="SUPFAM" id="SSF52058">
    <property type="entry name" value="L domain-like"/>
    <property type="match status" value="2"/>
</dbReference>
<dbReference type="SUPFAM" id="SSF50156">
    <property type="entry name" value="PDZ domain-like"/>
    <property type="match status" value="1"/>
</dbReference>
<dbReference type="PROSITE" id="PS51450">
    <property type="entry name" value="LRR"/>
    <property type="match status" value="15"/>
</dbReference>
<dbReference type="PROSITE" id="PS50106">
    <property type="entry name" value="PDZ"/>
    <property type="match status" value="1"/>
</dbReference>
<name>ERBIN_HUMAN</name>